<comment type="function">
    <text evidence="1">The glycine cleavage system catalyzes the degradation of glycine. The H protein shuttles the methylamine group of glycine from the P protein to the T protein.</text>
</comment>
<comment type="cofactor">
    <cofactor evidence="1">
        <name>(R)-lipoate</name>
        <dbReference type="ChEBI" id="CHEBI:83088"/>
    </cofactor>
    <text evidence="1">Binds 1 lipoyl cofactor covalently.</text>
</comment>
<comment type="subunit">
    <text evidence="1">The glycine cleavage system is composed of four proteins: P, T, L and H.</text>
</comment>
<comment type="similarity">
    <text evidence="1">Belongs to the GcvH family.</text>
</comment>
<gene>
    <name evidence="1" type="primary">gcvH</name>
    <name type="ordered locus">SbBS512_E3325</name>
</gene>
<evidence type="ECO:0000255" key="1">
    <source>
        <dbReference type="HAMAP-Rule" id="MF_00272"/>
    </source>
</evidence>
<evidence type="ECO:0000255" key="2">
    <source>
        <dbReference type="PROSITE-ProRule" id="PRU01066"/>
    </source>
</evidence>
<sequence length="129" mass="13811">MSNVPAELKYSKEHEWLRKEADGTYTVGITEHAQELLGDMVFVDLPEVGATVSAGDDCAVAESVKAASDIYAPVSGEIVAVNDALSDSPELVNSEPYAGGWIFKIKASDESELESLLDATAYEALLEDE</sequence>
<protein>
    <recommendedName>
        <fullName evidence="1">Glycine cleavage system H protein</fullName>
    </recommendedName>
</protein>
<accession>B2U0S1</accession>
<organism>
    <name type="scientific">Shigella boydii serotype 18 (strain CDC 3083-94 / BS512)</name>
    <dbReference type="NCBI Taxonomy" id="344609"/>
    <lineage>
        <taxon>Bacteria</taxon>
        <taxon>Pseudomonadati</taxon>
        <taxon>Pseudomonadota</taxon>
        <taxon>Gammaproteobacteria</taxon>
        <taxon>Enterobacterales</taxon>
        <taxon>Enterobacteriaceae</taxon>
        <taxon>Shigella</taxon>
    </lineage>
</organism>
<proteinExistence type="inferred from homology"/>
<feature type="chain" id="PRO_1000114552" description="Glycine cleavage system H protein">
    <location>
        <begin position="1"/>
        <end position="129"/>
    </location>
</feature>
<feature type="domain" description="Lipoyl-binding" evidence="2">
    <location>
        <begin position="24"/>
        <end position="106"/>
    </location>
</feature>
<feature type="modified residue" description="N6-lipoyllysine" evidence="1">
    <location>
        <position position="65"/>
    </location>
</feature>
<name>GCSH_SHIB3</name>
<dbReference type="EMBL" id="CP001063">
    <property type="protein sequence ID" value="ACD08734.1"/>
    <property type="molecule type" value="Genomic_DNA"/>
</dbReference>
<dbReference type="RefSeq" id="WP_001295377.1">
    <property type="nucleotide sequence ID" value="NC_010658.1"/>
</dbReference>
<dbReference type="SMR" id="B2U0S1"/>
<dbReference type="STRING" id="344609.SbBS512_E3325"/>
<dbReference type="GeneID" id="93779098"/>
<dbReference type="KEGG" id="sbc:SbBS512_E3325"/>
<dbReference type="HOGENOM" id="CLU_097408_2_1_6"/>
<dbReference type="Proteomes" id="UP000001030">
    <property type="component" value="Chromosome"/>
</dbReference>
<dbReference type="GO" id="GO:0005829">
    <property type="term" value="C:cytosol"/>
    <property type="evidence" value="ECO:0007669"/>
    <property type="project" value="TreeGrafter"/>
</dbReference>
<dbReference type="GO" id="GO:0005960">
    <property type="term" value="C:glycine cleavage complex"/>
    <property type="evidence" value="ECO:0007669"/>
    <property type="project" value="InterPro"/>
</dbReference>
<dbReference type="GO" id="GO:0019464">
    <property type="term" value="P:glycine decarboxylation via glycine cleavage system"/>
    <property type="evidence" value="ECO:0007669"/>
    <property type="project" value="UniProtKB-UniRule"/>
</dbReference>
<dbReference type="CDD" id="cd06848">
    <property type="entry name" value="GCS_H"/>
    <property type="match status" value="1"/>
</dbReference>
<dbReference type="FunFam" id="2.40.50.100:FF:000011">
    <property type="entry name" value="Glycine cleavage system H protein"/>
    <property type="match status" value="1"/>
</dbReference>
<dbReference type="Gene3D" id="2.40.50.100">
    <property type="match status" value="1"/>
</dbReference>
<dbReference type="HAMAP" id="MF_00272">
    <property type="entry name" value="GcvH"/>
    <property type="match status" value="1"/>
</dbReference>
<dbReference type="InterPro" id="IPR003016">
    <property type="entry name" value="2-oxoA_DH_lipoyl-BS"/>
</dbReference>
<dbReference type="InterPro" id="IPR000089">
    <property type="entry name" value="Biotin_lipoyl"/>
</dbReference>
<dbReference type="InterPro" id="IPR002930">
    <property type="entry name" value="GCV_H"/>
</dbReference>
<dbReference type="InterPro" id="IPR033753">
    <property type="entry name" value="GCV_H/Fam206"/>
</dbReference>
<dbReference type="InterPro" id="IPR017453">
    <property type="entry name" value="GCV_H_sub"/>
</dbReference>
<dbReference type="InterPro" id="IPR011053">
    <property type="entry name" value="Single_hybrid_motif"/>
</dbReference>
<dbReference type="NCBIfam" id="TIGR00527">
    <property type="entry name" value="gcvH"/>
    <property type="match status" value="1"/>
</dbReference>
<dbReference type="NCBIfam" id="NF002270">
    <property type="entry name" value="PRK01202.1"/>
    <property type="match status" value="1"/>
</dbReference>
<dbReference type="PANTHER" id="PTHR11715">
    <property type="entry name" value="GLYCINE CLEAVAGE SYSTEM H PROTEIN"/>
    <property type="match status" value="1"/>
</dbReference>
<dbReference type="PANTHER" id="PTHR11715:SF3">
    <property type="entry name" value="GLYCINE CLEAVAGE SYSTEM H PROTEIN-RELATED"/>
    <property type="match status" value="1"/>
</dbReference>
<dbReference type="Pfam" id="PF01597">
    <property type="entry name" value="GCV_H"/>
    <property type="match status" value="1"/>
</dbReference>
<dbReference type="SUPFAM" id="SSF51230">
    <property type="entry name" value="Single hybrid motif"/>
    <property type="match status" value="1"/>
</dbReference>
<dbReference type="PROSITE" id="PS50968">
    <property type="entry name" value="BIOTINYL_LIPOYL"/>
    <property type="match status" value="1"/>
</dbReference>
<dbReference type="PROSITE" id="PS00189">
    <property type="entry name" value="LIPOYL"/>
    <property type="match status" value="1"/>
</dbReference>
<keyword id="KW-0450">Lipoyl</keyword>
<keyword id="KW-1185">Reference proteome</keyword>
<reference key="1">
    <citation type="submission" date="2008-05" db="EMBL/GenBank/DDBJ databases">
        <title>Complete sequence of Shigella boydii serotype 18 strain BS512.</title>
        <authorList>
            <person name="Rasko D.A."/>
            <person name="Rosovitz M."/>
            <person name="Maurelli A.T."/>
            <person name="Myers G."/>
            <person name="Seshadri R."/>
            <person name="Cer R."/>
            <person name="Jiang L."/>
            <person name="Ravel J."/>
            <person name="Sebastian Y."/>
        </authorList>
    </citation>
    <scope>NUCLEOTIDE SEQUENCE [LARGE SCALE GENOMIC DNA]</scope>
    <source>
        <strain>CDC 3083-94 / BS512</strain>
    </source>
</reference>